<comment type="function">
    <text evidence="1">Bifunctional enzyme with both catalase and broad-spectrum peroxidase activity.</text>
</comment>
<comment type="catalytic activity">
    <reaction evidence="1">
        <text>H2O2 + AH2 = A + 2 H2O</text>
        <dbReference type="Rhea" id="RHEA:30275"/>
        <dbReference type="ChEBI" id="CHEBI:13193"/>
        <dbReference type="ChEBI" id="CHEBI:15377"/>
        <dbReference type="ChEBI" id="CHEBI:16240"/>
        <dbReference type="ChEBI" id="CHEBI:17499"/>
        <dbReference type="EC" id="1.11.1.21"/>
    </reaction>
</comment>
<comment type="catalytic activity">
    <reaction evidence="1">
        <text>2 H2O2 = O2 + 2 H2O</text>
        <dbReference type="Rhea" id="RHEA:20309"/>
        <dbReference type="ChEBI" id="CHEBI:15377"/>
        <dbReference type="ChEBI" id="CHEBI:15379"/>
        <dbReference type="ChEBI" id="CHEBI:16240"/>
        <dbReference type="EC" id="1.11.1.21"/>
    </reaction>
</comment>
<comment type="cofactor">
    <cofactor evidence="1">
        <name>heme b</name>
        <dbReference type="ChEBI" id="CHEBI:60344"/>
    </cofactor>
    <text evidence="1">Binds 1 heme b (iron(II)-protoporphyrin IX) group per dimer.</text>
</comment>
<comment type="subunit">
    <text evidence="1">Homodimer or homotetramer.</text>
</comment>
<comment type="PTM">
    <text evidence="1">Formation of the three residue Trp-Tyr-Met cross-link is important for the catalase, but not the peroxidase activity of the enzyme.</text>
</comment>
<comment type="similarity">
    <text evidence="1">Belongs to the peroxidase family. Peroxidase/catalase subfamily.</text>
</comment>
<protein>
    <recommendedName>
        <fullName evidence="1">Catalase-peroxidase</fullName>
        <shortName evidence="1">CP</shortName>
        <ecNumber evidence="1">1.11.1.21</ecNumber>
    </recommendedName>
    <alternativeName>
        <fullName evidence="1">Peroxidase/catalase</fullName>
    </alternativeName>
</protein>
<keyword id="KW-0349">Heme</keyword>
<keyword id="KW-0376">Hydrogen peroxide</keyword>
<keyword id="KW-0408">Iron</keyword>
<keyword id="KW-0479">Metal-binding</keyword>
<keyword id="KW-0560">Oxidoreductase</keyword>
<keyword id="KW-0575">Peroxidase</keyword>
<keyword id="KW-1185">Reference proteome</keyword>
<evidence type="ECO:0000255" key="1">
    <source>
        <dbReference type="HAMAP-Rule" id="MF_01961"/>
    </source>
</evidence>
<proteinExistence type="inferred from homology"/>
<feature type="chain" id="PRO_0000354856" description="Catalase-peroxidase">
    <location>
        <begin position="1"/>
        <end position="736"/>
    </location>
</feature>
<feature type="active site" description="Proton acceptor" evidence="1">
    <location>
        <position position="97"/>
    </location>
</feature>
<feature type="binding site" description="axial binding residue" evidence="1">
    <location>
        <position position="265"/>
    </location>
    <ligand>
        <name>heme b</name>
        <dbReference type="ChEBI" id="CHEBI:60344"/>
    </ligand>
    <ligandPart>
        <name>Fe</name>
        <dbReference type="ChEBI" id="CHEBI:18248"/>
    </ligandPart>
</feature>
<feature type="site" description="Transition state stabilizer" evidence="1">
    <location>
        <position position="93"/>
    </location>
</feature>
<feature type="cross-link" description="Tryptophyl-tyrosyl-methioninium (Trp-Tyr) (with M-250)" evidence="1">
    <location>
        <begin position="96"/>
        <end position="224"/>
    </location>
</feature>
<feature type="cross-link" description="Tryptophyl-tyrosyl-methioninium (Tyr-Met) (with W-96)" evidence="1">
    <location>
        <begin position="224"/>
        <end position="250"/>
    </location>
</feature>
<dbReference type="EC" id="1.11.1.21" evidence="1"/>
<dbReference type="EMBL" id="CP000482">
    <property type="protein sequence ID" value="ABK99003.1"/>
    <property type="molecule type" value="Genomic_DNA"/>
</dbReference>
<dbReference type="RefSeq" id="WP_011735296.1">
    <property type="nucleotide sequence ID" value="NC_008609.1"/>
</dbReference>
<dbReference type="SMR" id="A1ANT3"/>
<dbReference type="STRING" id="338966.Ppro_1387"/>
<dbReference type="PeroxiBase" id="2348">
    <property type="entry name" value="PprCP01"/>
</dbReference>
<dbReference type="KEGG" id="ppd:Ppro_1387"/>
<dbReference type="eggNOG" id="COG0376">
    <property type="taxonomic scope" value="Bacteria"/>
</dbReference>
<dbReference type="HOGENOM" id="CLU_025424_2_0_7"/>
<dbReference type="OrthoDB" id="9759743at2"/>
<dbReference type="Proteomes" id="UP000006732">
    <property type="component" value="Chromosome"/>
</dbReference>
<dbReference type="GO" id="GO:0005829">
    <property type="term" value="C:cytosol"/>
    <property type="evidence" value="ECO:0007669"/>
    <property type="project" value="TreeGrafter"/>
</dbReference>
<dbReference type="GO" id="GO:0004096">
    <property type="term" value="F:catalase activity"/>
    <property type="evidence" value="ECO:0007669"/>
    <property type="project" value="UniProtKB-UniRule"/>
</dbReference>
<dbReference type="GO" id="GO:0020037">
    <property type="term" value="F:heme binding"/>
    <property type="evidence" value="ECO:0007669"/>
    <property type="project" value="InterPro"/>
</dbReference>
<dbReference type="GO" id="GO:0046872">
    <property type="term" value="F:metal ion binding"/>
    <property type="evidence" value="ECO:0007669"/>
    <property type="project" value="UniProtKB-KW"/>
</dbReference>
<dbReference type="GO" id="GO:0070301">
    <property type="term" value="P:cellular response to hydrogen peroxide"/>
    <property type="evidence" value="ECO:0007669"/>
    <property type="project" value="TreeGrafter"/>
</dbReference>
<dbReference type="GO" id="GO:0042744">
    <property type="term" value="P:hydrogen peroxide catabolic process"/>
    <property type="evidence" value="ECO:0007669"/>
    <property type="project" value="UniProtKB-KW"/>
</dbReference>
<dbReference type="CDD" id="cd00649">
    <property type="entry name" value="catalase_peroxidase_1"/>
    <property type="match status" value="1"/>
</dbReference>
<dbReference type="CDD" id="cd08200">
    <property type="entry name" value="catalase_peroxidase_2"/>
    <property type="match status" value="1"/>
</dbReference>
<dbReference type="FunFam" id="1.10.420.10:FF:000002">
    <property type="entry name" value="Catalase-peroxidase"/>
    <property type="match status" value="1"/>
</dbReference>
<dbReference type="FunFam" id="1.10.420.10:FF:000004">
    <property type="entry name" value="Catalase-peroxidase"/>
    <property type="match status" value="1"/>
</dbReference>
<dbReference type="FunFam" id="1.10.520.10:FF:000002">
    <property type="entry name" value="Catalase-peroxidase"/>
    <property type="match status" value="1"/>
</dbReference>
<dbReference type="FunFam" id="1.10.520.10:FF:000004">
    <property type="entry name" value="Catalase-peroxidase"/>
    <property type="match status" value="1"/>
</dbReference>
<dbReference type="Gene3D" id="1.10.520.10">
    <property type="match status" value="2"/>
</dbReference>
<dbReference type="Gene3D" id="1.10.420.10">
    <property type="entry name" value="Peroxidase, domain 2"/>
    <property type="match status" value="2"/>
</dbReference>
<dbReference type="HAMAP" id="MF_01961">
    <property type="entry name" value="Catal_peroxid"/>
    <property type="match status" value="1"/>
</dbReference>
<dbReference type="InterPro" id="IPR000763">
    <property type="entry name" value="Catalase_peroxidase"/>
</dbReference>
<dbReference type="InterPro" id="IPR002016">
    <property type="entry name" value="Haem_peroxidase"/>
</dbReference>
<dbReference type="InterPro" id="IPR010255">
    <property type="entry name" value="Haem_peroxidase_sf"/>
</dbReference>
<dbReference type="InterPro" id="IPR019794">
    <property type="entry name" value="Peroxidases_AS"/>
</dbReference>
<dbReference type="InterPro" id="IPR019793">
    <property type="entry name" value="Peroxidases_heam-ligand_BS"/>
</dbReference>
<dbReference type="NCBIfam" id="TIGR00198">
    <property type="entry name" value="cat_per_HPI"/>
    <property type="match status" value="1"/>
</dbReference>
<dbReference type="NCBIfam" id="NF011635">
    <property type="entry name" value="PRK15061.1"/>
    <property type="match status" value="1"/>
</dbReference>
<dbReference type="PANTHER" id="PTHR30555:SF0">
    <property type="entry name" value="CATALASE-PEROXIDASE"/>
    <property type="match status" value="1"/>
</dbReference>
<dbReference type="PANTHER" id="PTHR30555">
    <property type="entry name" value="HYDROPEROXIDASE I, BIFUNCTIONAL CATALASE-PEROXIDASE"/>
    <property type="match status" value="1"/>
</dbReference>
<dbReference type="Pfam" id="PF00141">
    <property type="entry name" value="peroxidase"/>
    <property type="match status" value="2"/>
</dbReference>
<dbReference type="PRINTS" id="PR00460">
    <property type="entry name" value="BPEROXIDASE"/>
</dbReference>
<dbReference type="PRINTS" id="PR00458">
    <property type="entry name" value="PEROXIDASE"/>
</dbReference>
<dbReference type="SUPFAM" id="SSF48113">
    <property type="entry name" value="Heme-dependent peroxidases"/>
    <property type="match status" value="2"/>
</dbReference>
<dbReference type="PROSITE" id="PS00435">
    <property type="entry name" value="PEROXIDASE_1"/>
    <property type="match status" value="1"/>
</dbReference>
<dbReference type="PROSITE" id="PS00436">
    <property type="entry name" value="PEROXIDASE_2"/>
    <property type="match status" value="1"/>
</dbReference>
<dbReference type="PROSITE" id="PS50873">
    <property type="entry name" value="PEROXIDASE_4"/>
    <property type="match status" value="1"/>
</dbReference>
<gene>
    <name evidence="1" type="primary">katG</name>
    <name type="ordered locus">Ppro_1387</name>
</gene>
<organism>
    <name type="scientific">Pelobacter propionicus (strain DSM 2379 / NBRC 103807 / OttBd1)</name>
    <dbReference type="NCBI Taxonomy" id="338966"/>
    <lineage>
        <taxon>Bacteria</taxon>
        <taxon>Pseudomonadati</taxon>
        <taxon>Thermodesulfobacteriota</taxon>
        <taxon>Desulfuromonadia</taxon>
        <taxon>Desulfuromonadales</taxon>
        <taxon>Desulfuromonadaceae</taxon>
        <taxon>Pelobacter</taxon>
    </lineage>
</organism>
<sequence>MSNDCTCPVTGRVDKPIASSGRANRDWWPHQLNLKILHQNPPLGNPMGEEFSYAEEFKKLDLEALKKDLYALMTDSQEWWPADYGHYGGLFIRMAWHSAGTYRTGDGRGGGGSGSQRFAPLNSWPDNVNLDKARRLLWPIKQKYGRKISWADLMILAGNCALESMGFKTFGFGGGREDIWEPEEDIYWGSEAEWLATSDKPKSRYSGDRDLENPLAAVQMGLIYVNPEGPDGNPDPVASGRDVRETFGRMAMNDEETVALVAGGHTFGKCHGAGPATHVGPEPEAAPIEEQGLGWKSSFRSGKGGDTIGSGIEGAWKPNPTTWDMGYLKVLFKYEWELVKSPAGANQWLAKDVDEEDMVVDAHDPSKKHRPMMTTADLSLRFDPIYEPIARDYQQNPEKFADAFARAWFKLTHRDMGPRSRYLGAEVPAEELIWQDPVPTVDHQLIDGQDIAALKDTILASGLSVSQLVSTAWASASTFRGSDKRGGANGGRIRLAPQKDWEVNQPAQLKTVLQTLERIQKEYNDAQSGGKRVSLADLIVLGGCAGIEQAAKNAGQAVSVPFTPGRTDATQEQTDVASFAVLEPAADGFRNYLKTRYTVSAEELLVDRAQLLTLTAPEMTVLLGGMRVLNANYGQSRHGVFTKRPETLTNDFFLNLLDMGTVWKATSEAGDLFEGRDHTSGELKWTATRVDLIFGSNSQLRALAEVYGSGDSQEKFLHDFVAVWEKVMNLDRFDLA</sequence>
<accession>A1ANT3</accession>
<reference key="1">
    <citation type="submission" date="2006-10" db="EMBL/GenBank/DDBJ databases">
        <title>Complete sequence of chromosome of Pelobacter propionicus DSM 2379.</title>
        <authorList>
            <consortium name="US DOE Joint Genome Institute"/>
            <person name="Copeland A."/>
            <person name="Lucas S."/>
            <person name="Lapidus A."/>
            <person name="Barry K."/>
            <person name="Detter J.C."/>
            <person name="Glavina del Rio T."/>
            <person name="Hammon N."/>
            <person name="Israni S."/>
            <person name="Dalin E."/>
            <person name="Tice H."/>
            <person name="Pitluck S."/>
            <person name="Saunders E."/>
            <person name="Brettin T."/>
            <person name="Bruce D."/>
            <person name="Han C."/>
            <person name="Tapia R."/>
            <person name="Schmutz J."/>
            <person name="Larimer F."/>
            <person name="Land M."/>
            <person name="Hauser L."/>
            <person name="Kyrpides N."/>
            <person name="Kim E."/>
            <person name="Lovley D."/>
            <person name="Richardson P."/>
        </authorList>
    </citation>
    <scope>NUCLEOTIDE SEQUENCE [LARGE SCALE GENOMIC DNA]</scope>
    <source>
        <strain>DSM 2379 / NBRC 103807 / OttBd1</strain>
    </source>
</reference>
<name>KATG_PELPD</name>